<protein>
    <recommendedName>
        <fullName evidence="6">PAT complex subunit CCDC47</fullName>
    </recommendedName>
    <alternativeName>
        <fullName>Coiled-coil domain-containing protein 47</fullName>
    </alternativeName>
</protein>
<sequence length="483" mass="55742">MKGFHAFCVILLIFGSVSEAKFDDFEDEEDIVEYDDNDFAEFEDVAEDSVTESPQRVIITEDDEDETTVELEGQDESQEGDFEDADTQEGDTESEPYDDEEFEGYEDKPDTSSSKSKDPITIVDVPAHLQNSWESYYLEILMVTGLLAYIMNYIIGKNKNSRLAQAWFNTHRELLESNFTLVGDDGTNKEATSTGKLNQENEHIYNLWCSGRVCCEGMLIQLRFLKRQDLLNVLARMMRPVSDQVQIKVTMNDEDMDTYVFAVGARKALVRLQKEMQDLSEFCSDKPKSGAKYGLPDSLAILSEMGEVTDGMMDTKMLHFLTHYADKIESIHFSDQFSGPKIMQEEGQPLKLPDTKRTLLFTFNVPGSGNTYPKDMEALLPLMNMVIYSIDKAKKFRLNREGKQKADKNRARVEENFLKLTHVQRQEAAQSRREEKKRAEKERIMNEEDPEKQRRLEEAALRREQKKLEKKQMKMKQIKVKAM</sequence>
<proteinExistence type="evidence at transcript level"/>
<reference key="1">
    <citation type="journal article" date="2005" name="BMC Genomics">
        <title>Characterization of 954 bovine full-CDS cDNA sequences.</title>
        <authorList>
            <person name="Harhay G.P."/>
            <person name="Sonstegard T.S."/>
            <person name="Keele J.W."/>
            <person name="Heaton M.P."/>
            <person name="Clawson M.L."/>
            <person name="Snelling W.M."/>
            <person name="Wiedmann R.T."/>
            <person name="Van Tassell C.P."/>
            <person name="Smith T.P.L."/>
        </authorList>
    </citation>
    <scope>NUCLEOTIDE SEQUENCE [LARGE SCALE MRNA]</scope>
</reference>
<reference key="2">
    <citation type="submission" date="2005-08" db="EMBL/GenBank/DDBJ databases">
        <authorList>
            <consortium name="NIH - Mammalian Gene Collection (MGC) project"/>
        </authorList>
    </citation>
    <scope>NUCLEOTIDE SEQUENCE [LARGE SCALE MRNA]</scope>
    <source>
        <strain>Hereford</strain>
        <tissue>Rumen</tissue>
    </source>
</reference>
<evidence type="ECO:0000250" key="1">
    <source>
        <dbReference type="UniProtKB" id="A0A8I3P7X4"/>
    </source>
</evidence>
<evidence type="ECO:0000250" key="2">
    <source>
        <dbReference type="UniProtKB" id="Q96A33"/>
    </source>
</evidence>
<evidence type="ECO:0000250" key="3">
    <source>
        <dbReference type="UniProtKB" id="Q9D024"/>
    </source>
</evidence>
<evidence type="ECO:0000255" key="4"/>
<evidence type="ECO:0000256" key="5">
    <source>
        <dbReference type="SAM" id="MobiDB-lite"/>
    </source>
</evidence>
<evidence type="ECO:0000305" key="6"/>
<accession>Q3ZC50</accession>
<accession>A5D9E2</accession>
<dbReference type="EMBL" id="BT030561">
    <property type="protein sequence ID" value="ABQ13001.1"/>
    <property type="molecule type" value="mRNA"/>
</dbReference>
<dbReference type="EMBL" id="BC102915">
    <property type="protein sequence ID" value="AAI02916.1"/>
    <property type="molecule type" value="mRNA"/>
</dbReference>
<dbReference type="RefSeq" id="NP_001030505.1">
    <property type="nucleotide sequence ID" value="NM_001035428.1"/>
</dbReference>
<dbReference type="SMR" id="Q3ZC50"/>
<dbReference type="FunCoup" id="Q3ZC50">
    <property type="interactions" value="3434"/>
</dbReference>
<dbReference type="STRING" id="9913.ENSBTAP00000060375"/>
<dbReference type="GlyCosmos" id="Q3ZC50">
    <property type="glycosylation" value="1 site, No reported glycans"/>
</dbReference>
<dbReference type="GlyGen" id="Q3ZC50">
    <property type="glycosylation" value="1 site"/>
</dbReference>
<dbReference type="Ensembl" id="ENSBTAT00000082660.2">
    <property type="protein sequence ID" value="ENSBTAP00000060375.1"/>
    <property type="gene ID" value="ENSBTAG00000011834.7"/>
</dbReference>
<dbReference type="GeneID" id="540167"/>
<dbReference type="KEGG" id="bta:540167"/>
<dbReference type="CTD" id="57003"/>
<dbReference type="VEuPathDB" id="HostDB:ENSBTAG00000011834"/>
<dbReference type="VGNC" id="VGNC:97247">
    <property type="gene designation" value="CCDC47"/>
</dbReference>
<dbReference type="GeneTree" id="ENSGT00390000013997"/>
<dbReference type="InParanoid" id="Q3ZC50"/>
<dbReference type="OMA" id="MHLVRDM"/>
<dbReference type="OrthoDB" id="10039147at2759"/>
<dbReference type="Proteomes" id="UP000009136">
    <property type="component" value="Chromosome 19"/>
</dbReference>
<dbReference type="Bgee" id="ENSBTAG00000011834">
    <property type="expression patterns" value="Expressed in saliva-secreting gland and 108 other cell types or tissues"/>
</dbReference>
<dbReference type="GO" id="GO:0005783">
    <property type="term" value="C:endoplasmic reticulum"/>
    <property type="evidence" value="ECO:0000318"/>
    <property type="project" value="GO_Central"/>
</dbReference>
<dbReference type="GO" id="GO:0005789">
    <property type="term" value="C:endoplasmic reticulum membrane"/>
    <property type="evidence" value="ECO:0000250"/>
    <property type="project" value="UniProtKB"/>
</dbReference>
<dbReference type="GO" id="GO:0160064">
    <property type="term" value="C:multi-pass translocon complex"/>
    <property type="evidence" value="ECO:0000250"/>
    <property type="project" value="UniProtKB"/>
</dbReference>
<dbReference type="GO" id="GO:0101031">
    <property type="term" value="C:protein folding chaperone complex"/>
    <property type="evidence" value="ECO:0007669"/>
    <property type="project" value="Ensembl"/>
</dbReference>
<dbReference type="GO" id="GO:0030867">
    <property type="term" value="C:rough endoplasmic reticulum membrane"/>
    <property type="evidence" value="ECO:0007669"/>
    <property type="project" value="UniProtKB-SubCell"/>
</dbReference>
<dbReference type="GO" id="GO:0005509">
    <property type="term" value="F:calcium ion binding"/>
    <property type="evidence" value="ECO:0000318"/>
    <property type="project" value="GO_Central"/>
</dbReference>
<dbReference type="GO" id="GO:0044183">
    <property type="term" value="F:protein folding chaperone"/>
    <property type="evidence" value="ECO:0000250"/>
    <property type="project" value="UniProtKB"/>
</dbReference>
<dbReference type="GO" id="GO:0043022">
    <property type="term" value="F:ribosome binding"/>
    <property type="evidence" value="ECO:0000250"/>
    <property type="project" value="UniProtKB"/>
</dbReference>
<dbReference type="GO" id="GO:0032469">
    <property type="term" value="P:endoplasmic reticulum calcium ion homeostasis"/>
    <property type="evidence" value="ECO:0000250"/>
    <property type="project" value="UniProtKB"/>
</dbReference>
<dbReference type="GO" id="GO:0006983">
    <property type="term" value="P:ER overload response"/>
    <property type="evidence" value="ECO:0007669"/>
    <property type="project" value="Ensembl"/>
</dbReference>
<dbReference type="GO" id="GO:0036503">
    <property type="term" value="P:ERAD pathway"/>
    <property type="evidence" value="ECO:0000250"/>
    <property type="project" value="UniProtKB"/>
</dbReference>
<dbReference type="GO" id="GO:0160063">
    <property type="term" value="P:multi-pass transmembrane protein insertion into ER membrane"/>
    <property type="evidence" value="ECO:0000250"/>
    <property type="project" value="UniProtKB"/>
</dbReference>
<dbReference type="GO" id="GO:0009791">
    <property type="term" value="P:post-embryonic development"/>
    <property type="evidence" value="ECO:0007669"/>
    <property type="project" value="Ensembl"/>
</dbReference>
<dbReference type="GO" id="GO:0045048">
    <property type="term" value="P:protein insertion into ER membrane"/>
    <property type="evidence" value="ECO:0000250"/>
    <property type="project" value="UniProtKB"/>
</dbReference>
<dbReference type="InterPro" id="IPR012879">
    <property type="entry name" value="CCDC47"/>
</dbReference>
<dbReference type="PANTHER" id="PTHR12883">
    <property type="entry name" value="ADIPOCYTE-SPECIFIC PROTEIN 4-RELATED"/>
    <property type="match status" value="1"/>
</dbReference>
<dbReference type="PANTHER" id="PTHR12883:SF0">
    <property type="entry name" value="PAT COMPLEX SUBUNIT CCDC47"/>
    <property type="match status" value="1"/>
</dbReference>
<dbReference type="Pfam" id="PF07946">
    <property type="entry name" value="CCDC47"/>
    <property type="match status" value="1"/>
</dbReference>
<gene>
    <name type="primary">CCDC47</name>
</gene>
<name>CCD47_BOVIN</name>
<keyword id="KW-0143">Chaperone</keyword>
<keyword id="KW-0175">Coiled coil</keyword>
<keyword id="KW-0256">Endoplasmic reticulum</keyword>
<keyword id="KW-0325">Glycoprotein</keyword>
<keyword id="KW-0472">Membrane</keyword>
<keyword id="KW-1185">Reference proteome</keyword>
<keyword id="KW-0732">Signal</keyword>
<keyword id="KW-0812">Transmembrane</keyword>
<keyword id="KW-1133">Transmembrane helix</keyword>
<organism>
    <name type="scientific">Bos taurus</name>
    <name type="common">Bovine</name>
    <dbReference type="NCBI Taxonomy" id="9913"/>
    <lineage>
        <taxon>Eukaryota</taxon>
        <taxon>Metazoa</taxon>
        <taxon>Chordata</taxon>
        <taxon>Craniata</taxon>
        <taxon>Vertebrata</taxon>
        <taxon>Euteleostomi</taxon>
        <taxon>Mammalia</taxon>
        <taxon>Eutheria</taxon>
        <taxon>Laurasiatheria</taxon>
        <taxon>Artiodactyla</taxon>
        <taxon>Ruminantia</taxon>
        <taxon>Pecora</taxon>
        <taxon>Bovidae</taxon>
        <taxon>Bovinae</taxon>
        <taxon>Bos</taxon>
    </lineage>
</organism>
<feature type="signal peptide" evidence="4">
    <location>
        <begin position="1"/>
        <end position="20"/>
    </location>
</feature>
<feature type="chain" id="PRO_0000235796" description="PAT complex subunit CCDC47">
    <location>
        <begin position="21"/>
        <end position="483"/>
    </location>
</feature>
<feature type="topological domain" description="Cytoplasmic" evidence="1">
    <location>
        <begin position="21"/>
        <end position="135"/>
    </location>
</feature>
<feature type="transmembrane region" description="Helical" evidence="4">
    <location>
        <begin position="136"/>
        <end position="156"/>
    </location>
</feature>
<feature type="topological domain" description="Lumenal" evidence="1">
    <location>
        <begin position="157"/>
        <end position="483"/>
    </location>
</feature>
<feature type="region of interest" description="Disordered" evidence="5">
    <location>
        <begin position="44"/>
        <end position="118"/>
    </location>
</feature>
<feature type="region of interest" description="Disordered" evidence="5">
    <location>
        <begin position="424"/>
        <end position="483"/>
    </location>
</feature>
<feature type="coiled-coil region" evidence="4">
    <location>
        <begin position="450"/>
        <end position="483"/>
    </location>
</feature>
<feature type="compositionally biased region" description="Acidic residues" evidence="5">
    <location>
        <begin position="60"/>
        <end position="104"/>
    </location>
</feature>
<feature type="compositionally biased region" description="Basic and acidic residues" evidence="5">
    <location>
        <begin position="105"/>
        <end position="118"/>
    </location>
</feature>
<feature type="compositionally biased region" description="Basic and acidic residues" evidence="5">
    <location>
        <begin position="430"/>
        <end position="472"/>
    </location>
</feature>
<feature type="compositionally biased region" description="Basic residues" evidence="5">
    <location>
        <begin position="473"/>
        <end position="483"/>
    </location>
</feature>
<feature type="glycosylation site" description="N-linked (GlcNAc...) asparagine" evidence="4">
    <location>
        <position position="178"/>
    </location>
</feature>
<comment type="function">
    <text evidence="1 2 3">Component of the multi-pass translocon (MPT) complex that mediates insertion of multi-pass membrane proteins into the lipid bilayer of membranes. The MPT complex takes over after the SEC61 complex: following membrane insertion of the first few transmembrane segments of proteins by the SEC61 complex, the MPT complex occludes the lateral gate of the SEC61 complex to promote insertion of subsequent transmembrane regions (By similarity). Within the MPT complex, the PAT subcomplex sequesters any highly polar regions in the transmembrane domains away from the non-polar membrane environment until they can be buried in the interior of the fully assembled protein. Within the PAT subcomplex, CCDC47 occludes the lateral gate of the SEC61 complex (By similarity). Involved in the regulation of calcium ion homeostasis in the ER. Required for proper protein degradation via the ERAD (ER-associated degradation) pathway (By similarity). Has an essential role in the maintenance of ER organization during embryogenesis (By similarity).</text>
</comment>
<comment type="subunit">
    <text evidence="2 3">Component of the PAT complex, composed of WDR83OS/Asterix and CCDC47. The PAT complex is part of the multi-pass translocon (MPT) complex, composed of three subcomplexes, the GEL complex (composed of RAB5IF/OPTI and TMCO1), the BOS complex (composed of NCLN/Nicalin, NOMO1 and TMEM147) and the PAT complex (composed of WDR83OS/Asterix and CCDC47). The MPT complex associates with the SEC61 complex (By similarity). Interacts with VCP, HSPA5, DERL1, DERL2 and SELENOS (By similarity).</text>
</comment>
<comment type="subcellular location">
    <subcellularLocation>
        <location evidence="2">Endoplasmic reticulum membrane</location>
        <topology evidence="4">Single-pass type I membrane protein</topology>
    </subcellularLocation>
    <subcellularLocation>
        <location evidence="3">Rough endoplasmic reticulum membrane</location>
        <topology evidence="4">Single-pass type I membrane protein</topology>
    </subcellularLocation>
</comment>
<comment type="similarity">
    <text evidence="6">Belongs to the CCDC47 family.</text>
</comment>